<proteinExistence type="inferred from homology"/>
<feature type="chain" id="PRO_1000066840" description="Alkanesulfonate monooxygenase">
    <location>
        <begin position="1"/>
        <end position="382"/>
    </location>
</feature>
<sequence length="382" mass="41547">MSINVFWFLPTHGDGHYLGSSEGARAVDYSYLQQIAQAADRLGFGGVLIPTGRSCEDSWLVAASLIPVTQRLKFLVALRPGIISPTLAARQAATLDRLSNGRALFNLVTGGDPEELAAEGLHLNHTERYEASAEFTHVWRKVLEGETVDFAGKHIQVKGAKLLFPPVQHPRPPLYFGGSSAAAQDLAAEQVELYLTWGEPPEQVKEKIEEVRAKAAAKGRTVRFGIRLHVIVRETTEEAWRAANRLIANLDDKTIADAQQAFAGFDSVGQQRMAALHGGKKDNLEISPNLWAGVGLVRGGAGTALVGDGPTVAQRIQEYADLGIDTFVFSGYPHLEEAYRVSELLFPHLDLATTELPTQRPATQPQGEVVANIYVPQKVSQS</sequence>
<dbReference type="EC" id="1.14.14.5" evidence="1"/>
<dbReference type="EMBL" id="CP000668">
    <property type="protein sequence ID" value="ABP38651.1"/>
    <property type="molecule type" value="Genomic_DNA"/>
</dbReference>
<dbReference type="RefSeq" id="WP_002210034.1">
    <property type="nucleotide sequence ID" value="NZ_CP009715.1"/>
</dbReference>
<dbReference type="SMR" id="A4TH89"/>
<dbReference type="GeneID" id="57975051"/>
<dbReference type="KEGG" id="ypp:YPDSF_0232"/>
<dbReference type="PATRIC" id="fig|386656.14.peg.1524"/>
<dbReference type="GO" id="GO:0008726">
    <property type="term" value="F:alkanesulfonate monooxygenase activity"/>
    <property type="evidence" value="ECO:0007669"/>
    <property type="project" value="UniProtKB-UniRule"/>
</dbReference>
<dbReference type="GO" id="GO:0046306">
    <property type="term" value="P:alkanesulfonate catabolic process"/>
    <property type="evidence" value="ECO:0007669"/>
    <property type="project" value="TreeGrafter"/>
</dbReference>
<dbReference type="CDD" id="cd01094">
    <property type="entry name" value="Alkanesulfonate_monoxygenase"/>
    <property type="match status" value="1"/>
</dbReference>
<dbReference type="FunFam" id="3.20.20.30:FF:000001">
    <property type="entry name" value="Alkanesulfonate monooxygenase"/>
    <property type="match status" value="1"/>
</dbReference>
<dbReference type="Gene3D" id="3.20.20.30">
    <property type="entry name" value="Luciferase-like domain"/>
    <property type="match status" value="1"/>
</dbReference>
<dbReference type="HAMAP" id="MF_01229">
    <property type="entry name" value="Alkanesulf_monooxygen"/>
    <property type="match status" value="1"/>
</dbReference>
<dbReference type="InterPro" id="IPR019911">
    <property type="entry name" value="Alkanesulphonate_mOase_FMN-dep"/>
</dbReference>
<dbReference type="InterPro" id="IPR011251">
    <property type="entry name" value="Luciferase-like_dom"/>
</dbReference>
<dbReference type="InterPro" id="IPR036661">
    <property type="entry name" value="Luciferase-like_sf"/>
</dbReference>
<dbReference type="InterPro" id="IPR050172">
    <property type="entry name" value="SsuD_RutA_monooxygenase"/>
</dbReference>
<dbReference type="NCBIfam" id="TIGR03565">
    <property type="entry name" value="alk_sulf_monoox"/>
    <property type="match status" value="1"/>
</dbReference>
<dbReference type="NCBIfam" id="NF001939">
    <property type="entry name" value="PRK00719.1"/>
    <property type="match status" value="1"/>
</dbReference>
<dbReference type="PANTHER" id="PTHR42847">
    <property type="entry name" value="ALKANESULFONATE MONOOXYGENASE"/>
    <property type="match status" value="1"/>
</dbReference>
<dbReference type="PANTHER" id="PTHR42847:SF4">
    <property type="entry name" value="ALKANESULFONATE MONOOXYGENASE-RELATED"/>
    <property type="match status" value="1"/>
</dbReference>
<dbReference type="Pfam" id="PF00296">
    <property type="entry name" value="Bac_luciferase"/>
    <property type="match status" value="1"/>
</dbReference>
<dbReference type="SUPFAM" id="SSF51679">
    <property type="entry name" value="Bacterial luciferase-like"/>
    <property type="match status" value="1"/>
</dbReference>
<organism>
    <name type="scientific">Yersinia pestis (strain Pestoides F)</name>
    <dbReference type="NCBI Taxonomy" id="386656"/>
    <lineage>
        <taxon>Bacteria</taxon>
        <taxon>Pseudomonadati</taxon>
        <taxon>Pseudomonadota</taxon>
        <taxon>Gammaproteobacteria</taxon>
        <taxon>Enterobacterales</taxon>
        <taxon>Yersiniaceae</taxon>
        <taxon>Yersinia</taxon>
    </lineage>
</organism>
<evidence type="ECO:0000255" key="1">
    <source>
        <dbReference type="HAMAP-Rule" id="MF_01229"/>
    </source>
</evidence>
<reference key="1">
    <citation type="submission" date="2007-02" db="EMBL/GenBank/DDBJ databases">
        <title>Complete sequence of chromosome of Yersinia pestis Pestoides F.</title>
        <authorList>
            <consortium name="US DOE Joint Genome Institute"/>
            <person name="Copeland A."/>
            <person name="Lucas S."/>
            <person name="Lapidus A."/>
            <person name="Barry K."/>
            <person name="Detter J.C."/>
            <person name="Glavina del Rio T."/>
            <person name="Hammon N."/>
            <person name="Israni S."/>
            <person name="Dalin E."/>
            <person name="Tice H."/>
            <person name="Pitluck S."/>
            <person name="Di Bartolo G."/>
            <person name="Chain P."/>
            <person name="Malfatti S."/>
            <person name="Shin M."/>
            <person name="Vergez L."/>
            <person name="Schmutz J."/>
            <person name="Larimer F."/>
            <person name="Land M."/>
            <person name="Hauser L."/>
            <person name="Worsham P."/>
            <person name="Chu M."/>
            <person name="Bearden S."/>
            <person name="Garcia E."/>
            <person name="Richardson P."/>
        </authorList>
    </citation>
    <scope>NUCLEOTIDE SEQUENCE [LARGE SCALE GENOMIC DNA]</scope>
    <source>
        <strain>Pestoides F</strain>
    </source>
</reference>
<comment type="function">
    <text evidence="1">Catalyzes the desulfonation of aliphatic sulfonates.</text>
</comment>
<comment type="catalytic activity">
    <reaction evidence="1">
        <text>an alkanesulfonate + FMNH2 + O2 = an aldehyde + FMN + sulfite + H2O + 2 H(+)</text>
        <dbReference type="Rhea" id="RHEA:23064"/>
        <dbReference type="ChEBI" id="CHEBI:15377"/>
        <dbReference type="ChEBI" id="CHEBI:15378"/>
        <dbReference type="ChEBI" id="CHEBI:15379"/>
        <dbReference type="ChEBI" id="CHEBI:17359"/>
        <dbReference type="ChEBI" id="CHEBI:17478"/>
        <dbReference type="ChEBI" id="CHEBI:57618"/>
        <dbReference type="ChEBI" id="CHEBI:58210"/>
        <dbReference type="ChEBI" id="CHEBI:134249"/>
        <dbReference type="EC" id="1.14.14.5"/>
    </reaction>
</comment>
<comment type="subunit">
    <text evidence="1">Homotetramer.</text>
</comment>
<comment type="miscellaneous">
    <text evidence="1">FMNH(2) which is absolutely required for this enzymatic reaction, is provided by SsuE.</text>
</comment>
<comment type="similarity">
    <text evidence="1">Belongs to the SsuD family.</text>
</comment>
<protein>
    <recommendedName>
        <fullName evidence="1">Alkanesulfonate monooxygenase</fullName>
        <ecNumber evidence="1">1.14.14.5</ecNumber>
    </recommendedName>
    <alternativeName>
        <fullName evidence="1">FMNH2-dependent aliphatic sulfonate monooxygenase</fullName>
    </alternativeName>
</protein>
<accession>A4TH89</accession>
<name>SSUD_YERPP</name>
<keyword id="KW-0285">Flavoprotein</keyword>
<keyword id="KW-0288">FMN</keyword>
<keyword id="KW-0503">Monooxygenase</keyword>
<keyword id="KW-0560">Oxidoreductase</keyword>
<gene>
    <name evidence="1" type="primary">ssuD</name>
    <name type="ordered locus">YPDSF_0232</name>
</gene>